<protein>
    <recommendedName>
        <fullName evidence="5">Aquaglycerol porin AQY3</fullName>
    </recommendedName>
    <alternativeName>
        <fullName evidence="6">Aquaporin-3</fullName>
    </alternativeName>
</protein>
<sequence>MSYESGRSSSSSESTRPPTLKEEPNGKIAWEESVKKSRENNENDSTLLRRKLGETRKAIETGGSSRNKLSALTPLKKVVDERKDSVQPQVPSMGFTYSLPNLKTLNSFSDAEQARIMQDYLSRGVNQGNSNNYVDPLYRQLNPTMGSSRNRPVWSLNQPLPHVLDRGLAAKMIQKNMDARSRASSRRGSTDISRGGSTTSVKDWKRLLRGAAPGKKLGDIEAQTQRDNTVGADVKPTKLEPENPQKPSNTHIENVSRKKKRTSHNVNFSLGDESYASSIADAESRKLKNMQTLDGSTPVYTKLPEELIEEENKSTSALDGNEIGASEDEDADIMTFPNFWAKIRYHMREPFAEFLGTLVLVIFGVGGNLQATVTKGSGGSYESLSFAWGFGCMLGVYVAGGISGGHINPAVTISMAIFRKFPWKKVPVYIVAQIIGAYFGGAMAYGYFWSSITEFEGGPHIRTTATGACLFTDPKSYVTWRNAFFDEFIGASILVGCLMALLDDSNAPPGNGMTALIIGFLVAAIGMALGYQTSFTINPARDLGPRIFASMIGYGPHAFHLTHWWWTWGAWGGPIAGGIAGALIYDIFIFTGCESPVNYPDNGYIENRVGKLLHAEFHQNDGTVSDESGVNSNSNTGSKKSVPTSS</sequence>
<dbReference type="EMBL" id="D50617">
    <property type="protein sequence ID" value="BAA09187.1"/>
    <property type="molecule type" value="Genomic_DNA"/>
</dbReference>
<dbReference type="EMBL" id="AY692603">
    <property type="protein sequence ID" value="AAT92622.1"/>
    <property type="molecule type" value="Genomic_DNA"/>
</dbReference>
<dbReference type="EMBL" id="BK006940">
    <property type="protein sequence ID" value="DAA12386.1"/>
    <property type="molecule type" value="Genomic_DNA"/>
</dbReference>
<dbReference type="PIR" id="S56201">
    <property type="entry name" value="S56201"/>
</dbReference>
<dbReference type="RefSeq" id="NP_116601.1">
    <property type="nucleotide sequence ID" value="NM_001179913.1"/>
</dbReference>
<dbReference type="SMR" id="P43549"/>
<dbReference type="BioGRID" id="31093">
    <property type="interactions" value="141"/>
</dbReference>
<dbReference type="DIP" id="DIP-4535N"/>
<dbReference type="FunCoup" id="P43549">
    <property type="interactions" value="53"/>
</dbReference>
<dbReference type="IntAct" id="P43549">
    <property type="interactions" value="1"/>
</dbReference>
<dbReference type="MINT" id="P43549"/>
<dbReference type="STRING" id="4932.YFL054C"/>
<dbReference type="TCDB" id="1.A.8.9.7">
    <property type="family name" value="the major intrinsic protein (mip) family"/>
</dbReference>
<dbReference type="iPTMnet" id="P43549"/>
<dbReference type="PaxDb" id="4932-YFL054C"/>
<dbReference type="PeptideAtlas" id="P43549"/>
<dbReference type="EnsemblFungi" id="YFL054C_mRNA">
    <property type="protein sequence ID" value="YFL054C"/>
    <property type="gene ID" value="YFL054C"/>
</dbReference>
<dbReference type="GeneID" id="850490"/>
<dbReference type="KEGG" id="sce:YFL054C"/>
<dbReference type="AGR" id="SGD:S000001840"/>
<dbReference type="SGD" id="S000001840">
    <property type="gene designation" value="AQY3"/>
</dbReference>
<dbReference type="VEuPathDB" id="FungiDB:YFL054C"/>
<dbReference type="eggNOG" id="KOG0224">
    <property type="taxonomic scope" value="Eukaryota"/>
</dbReference>
<dbReference type="GeneTree" id="ENSGT00940000176604"/>
<dbReference type="HOGENOM" id="CLU_020019_2_1_1"/>
<dbReference type="InParanoid" id="P43549"/>
<dbReference type="OMA" id="NPAYEQP"/>
<dbReference type="OrthoDB" id="3222at2759"/>
<dbReference type="BioCyc" id="YEAST:G3O-30412-MONOMER"/>
<dbReference type="Reactome" id="R-SCE-432030">
    <property type="pathway name" value="Transport of glycerol from adipocytes to the liver by Aquaporins"/>
</dbReference>
<dbReference type="Reactome" id="R-SCE-432040">
    <property type="pathway name" value="Vasopressin regulates renal water homeostasis via Aquaporins"/>
</dbReference>
<dbReference type="Reactome" id="R-SCE-432047">
    <property type="pathway name" value="Passive transport by Aquaporins"/>
</dbReference>
<dbReference type="BioGRID-ORCS" id="850490">
    <property type="hits" value="3 hits in 10 CRISPR screens"/>
</dbReference>
<dbReference type="PRO" id="PR:P43549"/>
<dbReference type="Proteomes" id="UP000002311">
    <property type="component" value="Chromosome VI"/>
</dbReference>
<dbReference type="RNAct" id="P43549">
    <property type="molecule type" value="protein"/>
</dbReference>
<dbReference type="GO" id="GO:0071944">
    <property type="term" value="C:cell periphery"/>
    <property type="evidence" value="ECO:0007005"/>
    <property type="project" value="SGD"/>
</dbReference>
<dbReference type="GO" id="GO:0005886">
    <property type="term" value="C:plasma membrane"/>
    <property type="evidence" value="ECO:0000318"/>
    <property type="project" value="GO_Central"/>
</dbReference>
<dbReference type="GO" id="GO:0015254">
    <property type="term" value="F:glycerol channel activity"/>
    <property type="evidence" value="ECO:0000315"/>
    <property type="project" value="SGD"/>
</dbReference>
<dbReference type="GO" id="GO:0015250">
    <property type="term" value="F:water channel activity"/>
    <property type="evidence" value="ECO:0000318"/>
    <property type="project" value="GO_Central"/>
</dbReference>
<dbReference type="GO" id="GO:0015793">
    <property type="term" value="P:glycerol transmembrane transport"/>
    <property type="evidence" value="ECO:0000318"/>
    <property type="project" value="GO_Central"/>
</dbReference>
<dbReference type="GO" id="GO:0055085">
    <property type="term" value="P:transmembrane transport"/>
    <property type="evidence" value="ECO:0000315"/>
    <property type="project" value="SGD"/>
</dbReference>
<dbReference type="GO" id="GO:0006833">
    <property type="term" value="P:water transport"/>
    <property type="evidence" value="ECO:0000318"/>
    <property type="project" value="GO_Central"/>
</dbReference>
<dbReference type="CDD" id="cd00333">
    <property type="entry name" value="MIP"/>
    <property type="match status" value="1"/>
</dbReference>
<dbReference type="FunFam" id="1.20.1080.10:FF:000022">
    <property type="entry name" value="MIP aquaporin"/>
    <property type="match status" value="1"/>
</dbReference>
<dbReference type="Gene3D" id="1.20.1080.10">
    <property type="entry name" value="Glycerol uptake facilitator protein"/>
    <property type="match status" value="1"/>
</dbReference>
<dbReference type="InterPro" id="IPR023271">
    <property type="entry name" value="Aquaporin-like"/>
</dbReference>
<dbReference type="InterPro" id="IPR000425">
    <property type="entry name" value="MIP"/>
</dbReference>
<dbReference type="InterPro" id="IPR050363">
    <property type="entry name" value="MIP/Aquaporin"/>
</dbReference>
<dbReference type="InterPro" id="IPR022357">
    <property type="entry name" value="MIP_CS"/>
</dbReference>
<dbReference type="NCBIfam" id="TIGR00861">
    <property type="entry name" value="MIP"/>
    <property type="match status" value="1"/>
</dbReference>
<dbReference type="PANTHER" id="PTHR43829">
    <property type="entry name" value="AQUAPORIN OR AQUAGLYCEROPORIN RELATED"/>
    <property type="match status" value="1"/>
</dbReference>
<dbReference type="PANTHER" id="PTHR43829:SF9">
    <property type="entry name" value="AQUAPORIN-9"/>
    <property type="match status" value="1"/>
</dbReference>
<dbReference type="Pfam" id="PF00230">
    <property type="entry name" value="MIP"/>
    <property type="match status" value="1"/>
</dbReference>
<dbReference type="PRINTS" id="PR00783">
    <property type="entry name" value="MINTRINSICP"/>
</dbReference>
<dbReference type="SUPFAM" id="SSF81338">
    <property type="entry name" value="Aquaporin-like"/>
    <property type="match status" value="1"/>
</dbReference>
<dbReference type="PROSITE" id="PS00221">
    <property type="entry name" value="MIP"/>
    <property type="match status" value="1"/>
</dbReference>
<proteinExistence type="evidence at protein level"/>
<reference key="1">
    <citation type="journal article" date="1995" name="Nat. Genet.">
        <title>Analysis of the nucleotide sequence of chromosome VI from Saccharomyces cerevisiae.</title>
        <authorList>
            <person name="Murakami Y."/>
            <person name="Naitou M."/>
            <person name="Hagiwara H."/>
            <person name="Shibata T."/>
            <person name="Ozawa M."/>
            <person name="Sasanuma S."/>
            <person name="Sasanuma M."/>
            <person name="Tsuchiya Y."/>
            <person name="Soeda E."/>
            <person name="Yokoyama K."/>
            <person name="Yamazaki M."/>
            <person name="Tashiro H."/>
            <person name="Eki T."/>
        </authorList>
    </citation>
    <scope>NUCLEOTIDE SEQUENCE [LARGE SCALE GENOMIC DNA]</scope>
    <source>
        <strain>ATCC 204508 / S288c</strain>
    </source>
</reference>
<reference key="2">
    <citation type="journal article" date="2014" name="G3 (Bethesda)">
        <title>The reference genome sequence of Saccharomyces cerevisiae: Then and now.</title>
        <authorList>
            <person name="Engel S.R."/>
            <person name="Dietrich F.S."/>
            <person name="Fisk D.G."/>
            <person name="Binkley G."/>
            <person name="Balakrishnan R."/>
            <person name="Costanzo M.C."/>
            <person name="Dwight S.S."/>
            <person name="Hitz B.C."/>
            <person name="Karra K."/>
            <person name="Nash R.S."/>
            <person name="Weng S."/>
            <person name="Wong E.D."/>
            <person name="Lloyd P."/>
            <person name="Skrzypek M.S."/>
            <person name="Miyasato S.R."/>
            <person name="Simison M."/>
            <person name="Cherry J.M."/>
        </authorList>
    </citation>
    <scope>GENOME REANNOTATION</scope>
    <source>
        <strain>ATCC 204508 / S288c</strain>
    </source>
</reference>
<reference key="3">
    <citation type="journal article" date="2007" name="Genome Res.">
        <title>Approaching a complete repository of sequence-verified protein-encoding clones for Saccharomyces cerevisiae.</title>
        <authorList>
            <person name="Hu Y."/>
            <person name="Rolfs A."/>
            <person name="Bhullar B."/>
            <person name="Murthy T.V.S."/>
            <person name="Zhu C."/>
            <person name="Berger M.F."/>
            <person name="Camargo A.A."/>
            <person name="Kelley F."/>
            <person name="McCarron S."/>
            <person name="Jepson D."/>
            <person name="Richardson A."/>
            <person name="Raphael J."/>
            <person name="Moreira D."/>
            <person name="Taycher E."/>
            <person name="Zuo D."/>
            <person name="Mohr S."/>
            <person name="Kane M.F."/>
            <person name="Williamson J."/>
            <person name="Simpson A.J.G."/>
            <person name="Bulyk M.L."/>
            <person name="Harlow E."/>
            <person name="Marsischky G."/>
            <person name="Kolodner R.D."/>
            <person name="LaBaer J."/>
        </authorList>
    </citation>
    <scope>NUCLEOTIDE SEQUENCE [GENOMIC DNA]</scope>
    <source>
        <strain>ATCC 204508 / S288c</strain>
    </source>
</reference>
<reference key="4">
    <citation type="journal article" date="1998" name="J. Biol. Chem.">
        <title>Aquaporins in Saccharomyces. Genetic and functional distinctions between laboratory and wild-type strains.</title>
        <authorList>
            <person name="Bonhivers M."/>
            <person name="Carbrey J.M."/>
            <person name="Gould S.J."/>
            <person name="Agre P."/>
        </authorList>
    </citation>
    <scope>IDENTIFICATION</scope>
</reference>
<reference key="5">
    <citation type="journal article" date="2003" name="Biochim. Biophys. Acta">
        <title>Fps1p channel is the mediator of the major part of glycerol passive diffusion in Saccharomyces cerevisiae: artefacts and re-definitions.</title>
        <authorList>
            <person name="Oliveira R."/>
            <person name="Lages F."/>
            <person name="Silva-Graca M."/>
            <person name="Lucas C."/>
        </authorList>
    </citation>
    <scope>FUNCTION</scope>
    <scope>DISRUPTION PHENOTYPE</scope>
</reference>
<reference key="6">
    <citation type="journal article" date="2006" name="Proc. Natl. Acad. Sci. U.S.A.">
        <title>A global topology map of the Saccharomyces cerevisiae membrane proteome.</title>
        <authorList>
            <person name="Kim H."/>
            <person name="Melen K."/>
            <person name="Oesterberg M."/>
            <person name="von Heijne G."/>
        </authorList>
    </citation>
    <scope>TOPOLOGY [LARGE SCALE ANALYSIS]</scope>
    <source>
        <strain>ATCC 208353 / W303-1A</strain>
    </source>
</reference>
<reference key="7">
    <citation type="journal article" date="2008" name="Mol. Cell. Proteomics">
        <title>A multidimensional chromatography technology for in-depth phosphoproteome analysis.</title>
        <authorList>
            <person name="Albuquerque C.P."/>
            <person name="Smolka M.B."/>
            <person name="Payne S.H."/>
            <person name="Bafna V."/>
            <person name="Eng J."/>
            <person name="Zhou H."/>
        </authorList>
    </citation>
    <scope>IDENTIFICATION BY MASS SPECTROMETRY [LARGE SCALE ANALYSIS]</scope>
</reference>
<feature type="chain" id="PRO_0000064099" description="Aquaglycerol porin AQY3">
    <location>
        <begin position="1"/>
        <end position="646"/>
    </location>
</feature>
<feature type="topological domain" description="Cytoplasmic" evidence="4">
    <location>
        <begin position="1"/>
        <end position="350"/>
    </location>
</feature>
<feature type="transmembrane region" description="Helical" evidence="1">
    <location>
        <begin position="351"/>
        <end position="371"/>
    </location>
</feature>
<feature type="topological domain" description="Extracellular" evidence="4">
    <location>
        <begin position="372"/>
        <end position="383"/>
    </location>
</feature>
<feature type="transmembrane region" description="Helical" evidence="1">
    <location>
        <begin position="384"/>
        <end position="404"/>
    </location>
</feature>
<feature type="topological domain" description="Cytoplasmic" evidence="4">
    <location>
        <begin position="405"/>
        <end position="427"/>
    </location>
</feature>
<feature type="transmembrane region" description="Helical" evidence="1">
    <location>
        <begin position="428"/>
        <end position="448"/>
    </location>
</feature>
<feature type="topological domain" description="Extracellular" evidence="4">
    <location>
        <begin position="449"/>
        <end position="481"/>
    </location>
</feature>
<feature type="transmembrane region" description="Helical" evidence="1">
    <location>
        <begin position="482"/>
        <end position="502"/>
    </location>
</feature>
<feature type="topological domain" description="Cytoplasmic" evidence="4">
    <location>
        <begin position="503"/>
        <end position="509"/>
    </location>
</feature>
<feature type="transmembrane region" description="Helical" evidence="1">
    <location>
        <begin position="510"/>
        <end position="530"/>
    </location>
</feature>
<feature type="topological domain" description="Extracellular" evidence="4">
    <location>
        <begin position="531"/>
        <end position="569"/>
    </location>
</feature>
<feature type="transmembrane region" description="Helical" evidence="1">
    <location>
        <begin position="570"/>
        <end position="590"/>
    </location>
</feature>
<feature type="topological domain" description="Cytoplasmic" evidence="4">
    <location>
        <begin position="591"/>
        <end position="646"/>
    </location>
</feature>
<feature type="region of interest" description="Disordered" evidence="2">
    <location>
        <begin position="1"/>
        <end position="68"/>
    </location>
</feature>
<feature type="region of interest" description="Disordered" evidence="2">
    <location>
        <begin position="175"/>
        <end position="262"/>
    </location>
</feature>
<feature type="region of interest" description="Disordered" evidence="2">
    <location>
        <begin position="621"/>
        <end position="646"/>
    </location>
</feature>
<feature type="short sequence motif" description="NPA 1">
    <location>
        <begin position="408"/>
        <end position="410"/>
    </location>
</feature>
<feature type="short sequence motif" description="NPA 2">
    <location>
        <begin position="538"/>
        <end position="540"/>
    </location>
</feature>
<feature type="compositionally biased region" description="Low complexity" evidence="2">
    <location>
        <begin position="1"/>
        <end position="14"/>
    </location>
</feature>
<feature type="compositionally biased region" description="Basic and acidic residues" evidence="2">
    <location>
        <begin position="19"/>
        <end position="41"/>
    </location>
</feature>
<feature type="compositionally biased region" description="Polar residues" evidence="2">
    <location>
        <begin position="190"/>
        <end position="201"/>
    </location>
</feature>
<accession>P43549</accession>
<accession>D6VTH6</accession>
<comment type="function">
    <text evidence="3">Channel protein that mediates glycerol entry under ethanol stimulation (PubMed:12832087). Does not seem to mediate glycerol uptake under standard conditions (PubMed:12832087).</text>
</comment>
<comment type="catalytic activity">
    <reaction evidence="3">
        <text>glycerol(in) = glycerol(out)</text>
        <dbReference type="Rhea" id="RHEA:29675"/>
        <dbReference type="ChEBI" id="CHEBI:17754"/>
    </reaction>
</comment>
<comment type="subcellular location">
    <subcellularLocation>
        <location evidence="8">Cell membrane</location>
        <topology evidence="1">Multi-pass membrane protein</topology>
    </subcellularLocation>
</comment>
<comment type="domain">
    <text evidence="7">Aquaporins contain two tandem repeats each containing three membrane-spanning domains and a pore-forming loop with the signature motif Asn-Pro-Ala (NPA).</text>
</comment>
<comment type="disruption phenotype">
    <text evidence="3">Decreases the gylcerol uptake in presence of ethanol.</text>
</comment>
<comment type="similarity">
    <text evidence="7">Belongs to the MIP/aquaporin (TC 1.A.8) family.</text>
</comment>
<name>AQY3_YEAST</name>
<gene>
    <name evidence="6" type="primary">AQY3</name>
    <name type="ordered locus">YFL054C</name>
</gene>
<organism>
    <name type="scientific">Saccharomyces cerevisiae (strain ATCC 204508 / S288c)</name>
    <name type="common">Baker's yeast</name>
    <dbReference type="NCBI Taxonomy" id="559292"/>
    <lineage>
        <taxon>Eukaryota</taxon>
        <taxon>Fungi</taxon>
        <taxon>Dikarya</taxon>
        <taxon>Ascomycota</taxon>
        <taxon>Saccharomycotina</taxon>
        <taxon>Saccharomycetes</taxon>
        <taxon>Saccharomycetales</taxon>
        <taxon>Saccharomycetaceae</taxon>
        <taxon>Saccharomyces</taxon>
    </lineage>
</organism>
<keyword id="KW-1003">Cell membrane</keyword>
<keyword id="KW-0472">Membrane</keyword>
<keyword id="KW-1185">Reference proteome</keyword>
<keyword id="KW-0677">Repeat</keyword>
<keyword id="KW-0812">Transmembrane</keyword>
<keyword id="KW-1133">Transmembrane helix</keyword>
<keyword id="KW-0813">Transport</keyword>
<evidence type="ECO:0000255" key="1"/>
<evidence type="ECO:0000256" key="2">
    <source>
        <dbReference type="SAM" id="MobiDB-lite"/>
    </source>
</evidence>
<evidence type="ECO:0000269" key="3">
    <source>
    </source>
</evidence>
<evidence type="ECO:0000269" key="4">
    <source>
    </source>
</evidence>
<evidence type="ECO:0000303" key="5">
    <source>
    </source>
</evidence>
<evidence type="ECO:0000303" key="6">
    <source>
    </source>
</evidence>
<evidence type="ECO:0000305" key="7"/>
<evidence type="ECO:0000305" key="8">
    <source>
    </source>
</evidence>